<gene>
    <name type="primary">MT-ND4L</name>
    <name type="synonym">MTND4L</name>
    <name type="synonym">NADH4L</name>
    <name type="synonym">ND4L</name>
</gene>
<organism>
    <name type="scientific">Zalophus californianus</name>
    <name type="common">California sealion</name>
    <dbReference type="NCBI Taxonomy" id="9704"/>
    <lineage>
        <taxon>Eukaryota</taxon>
        <taxon>Metazoa</taxon>
        <taxon>Chordata</taxon>
        <taxon>Craniata</taxon>
        <taxon>Vertebrata</taxon>
        <taxon>Euteleostomi</taxon>
        <taxon>Mammalia</taxon>
        <taxon>Eutheria</taxon>
        <taxon>Laurasiatheria</taxon>
        <taxon>Carnivora</taxon>
        <taxon>Caniformia</taxon>
        <taxon>Pinnipedia</taxon>
        <taxon>Otariidae</taxon>
        <taxon>Zalophus</taxon>
    </lineage>
</organism>
<feature type="chain" id="PRO_0000275152" description="NADH-ubiquinone oxidoreductase chain 4L">
    <location>
        <begin position="1"/>
        <end position="98"/>
    </location>
</feature>
<feature type="transmembrane region" description="Helical" evidence="3">
    <location>
        <begin position="1"/>
        <end position="21"/>
    </location>
</feature>
<feature type="transmembrane region" description="Helical" evidence="3">
    <location>
        <begin position="29"/>
        <end position="49"/>
    </location>
</feature>
<feature type="transmembrane region" description="Helical" evidence="3">
    <location>
        <begin position="61"/>
        <end position="81"/>
    </location>
</feature>
<keyword id="KW-0249">Electron transport</keyword>
<keyword id="KW-0472">Membrane</keyword>
<keyword id="KW-0496">Mitochondrion</keyword>
<keyword id="KW-0999">Mitochondrion inner membrane</keyword>
<keyword id="KW-0520">NAD</keyword>
<keyword id="KW-0679">Respiratory chain</keyword>
<keyword id="KW-1278">Translocase</keyword>
<keyword id="KW-0812">Transmembrane</keyword>
<keyword id="KW-1133">Transmembrane helix</keyword>
<keyword id="KW-0813">Transport</keyword>
<keyword id="KW-0830">Ubiquinone</keyword>
<protein>
    <recommendedName>
        <fullName>NADH-ubiquinone oxidoreductase chain 4L</fullName>
        <ecNumber>7.1.1.2</ecNumber>
    </recommendedName>
    <alternativeName>
        <fullName>NADH dehydrogenase subunit 4L</fullName>
    </alternativeName>
</protein>
<reference key="1">
    <citation type="journal article" date="2006" name="Mol. Phylogenet. Evol.">
        <title>Pinniped phylogeny and a new hypothesis for their origin and dispersal.</title>
        <authorList>
            <person name="Arnason U."/>
            <person name="Gullberg A."/>
            <person name="Janke A."/>
            <person name="Kullberg M."/>
            <person name="Lehman N."/>
            <person name="Petrov E.A."/>
            <person name="Vainola R."/>
        </authorList>
    </citation>
    <scope>NUCLEOTIDE SEQUENCE [GENOMIC DNA]</scope>
</reference>
<evidence type="ECO:0000250" key="1">
    <source>
        <dbReference type="UniProtKB" id="P03901"/>
    </source>
</evidence>
<evidence type="ECO:0000250" key="2">
    <source>
        <dbReference type="UniProtKB" id="P03902"/>
    </source>
</evidence>
<evidence type="ECO:0000255" key="3"/>
<evidence type="ECO:0000305" key="4"/>
<geneLocation type="mitochondrion"/>
<comment type="function">
    <text evidence="1">Core subunit of the mitochondrial membrane respiratory chain NADH dehydrogenase (Complex I) which catalyzes electron transfer from NADH through the respiratory chain, using ubiquinone as an electron acceptor. Part of the enzyme membrane arm which is embedded in the lipid bilayer and involved in proton translocation.</text>
</comment>
<comment type="catalytic activity">
    <reaction evidence="1">
        <text>a ubiquinone + NADH + 5 H(+)(in) = a ubiquinol + NAD(+) + 4 H(+)(out)</text>
        <dbReference type="Rhea" id="RHEA:29091"/>
        <dbReference type="Rhea" id="RHEA-COMP:9565"/>
        <dbReference type="Rhea" id="RHEA-COMP:9566"/>
        <dbReference type="ChEBI" id="CHEBI:15378"/>
        <dbReference type="ChEBI" id="CHEBI:16389"/>
        <dbReference type="ChEBI" id="CHEBI:17976"/>
        <dbReference type="ChEBI" id="CHEBI:57540"/>
        <dbReference type="ChEBI" id="CHEBI:57945"/>
        <dbReference type="EC" id="7.1.1.2"/>
    </reaction>
    <physiologicalReaction direction="left-to-right" evidence="1">
        <dbReference type="Rhea" id="RHEA:29092"/>
    </physiologicalReaction>
</comment>
<comment type="subunit">
    <text evidence="2">Core subunit of respiratory chain NADH dehydrogenase (Complex I) which is composed of 45 different subunits.</text>
</comment>
<comment type="subcellular location">
    <subcellularLocation>
        <location evidence="2">Mitochondrion inner membrane</location>
        <topology evidence="3">Multi-pass membrane protein</topology>
    </subcellularLocation>
</comment>
<comment type="similarity">
    <text evidence="4">Belongs to the complex I subunit 4L family.</text>
</comment>
<dbReference type="EC" id="7.1.1.2"/>
<dbReference type="EMBL" id="AM181017">
    <property type="protein sequence ID" value="CAJ56892.1"/>
    <property type="molecule type" value="Genomic_DNA"/>
</dbReference>
<dbReference type="RefSeq" id="YP_778703.1">
    <property type="nucleotide sequence ID" value="NC_008416.1"/>
</dbReference>
<dbReference type="SMR" id="Q08HK6"/>
<dbReference type="GeneID" id="4355798"/>
<dbReference type="KEGG" id="zca:4355798"/>
<dbReference type="CTD" id="4539"/>
<dbReference type="OrthoDB" id="6146597at2759"/>
<dbReference type="Proteomes" id="UP000515165">
    <property type="component" value="Mitochondrion MT"/>
</dbReference>
<dbReference type="GO" id="GO:0005743">
    <property type="term" value="C:mitochondrial inner membrane"/>
    <property type="evidence" value="ECO:0000250"/>
    <property type="project" value="UniProtKB"/>
</dbReference>
<dbReference type="GO" id="GO:0045271">
    <property type="term" value="C:respiratory chain complex I"/>
    <property type="evidence" value="ECO:0000250"/>
    <property type="project" value="UniProtKB"/>
</dbReference>
<dbReference type="GO" id="GO:0008137">
    <property type="term" value="F:NADH dehydrogenase (ubiquinone) activity"/>
    <property type="evidence" value="ECO:0000250"/>
    <property type="project" value="UniProtKB"/>
</dbReference>
<dbReference type="GO" id="GO:0042773">
    <property type="term" value="P:ATP synthesis coupled electron transport"/>
    <property type="evidence" value="ECO:0007669"/>
    <property type="project" value="InterPro"/>
</dbReference>
<dbReference type="FunFam" id="1.10.287.3510:FF:000002">
    <property type="entry name" value="NADH-ubiquinone oxidoreductase chain 4L"/>
    <property type="match status" value="1"/>
</dbReference>
<dbReference type="Gene3D" id="1.10.287.3510">
    <property type="match status" value="1"/>
</dbReference>
<dbReference type="InterPro" id="IPR001133">
    <property type="entry name" value="NADH_UbQ_OxRdtase_chain4L/K"/>
</dbReference>
<dbReference type="InterPro" id="IPR039428">
    <property type="entry name" value="NUOK/Mnh_C1-like"/>
</dbReference>
<dbReference type="PANTHER" id="PTHR11434:SF0">
    <property type="entry name" value="NADH-UBIQUINONE OXIDOREDUCTASE CHAIN 4L"/>
    <property type="match status" value="1"/>
</dbReference>
<dbReference type="PANTHER" id="PTHR11434">
    <property type="entry name" value="NADH-UBIQUINONE OXIDOREDUCTASE SUBUNIT ND4L"/>
    <property type="match status" value="1"/>
</dbReference>
<dbReference type="Pfam" id="PF00420">
    <property type="entry name" value="Oxidored_q2"/>
    <property type="match status" value="1"/>
</dbReference>
<accession>Q08HK6</accession>
<proteinExistence type="inferred from homology"/>
<name>NU4LM_ZALCA</name>
<sequence length="98" mass="10890">MSMMYFNIFMAFTVSLVGLLMYRSHLMSSLLCLEGMMLSLFVMMSVTILNNHFTLASMAPIILLVFAACEAALGLSLLVMVSNTYGTDYVQNLNLLQC</sequence>